<feature type="chain" id="PRO_0000247914" description="Plasma membrane proteolipid 3">
    <location>
        <begin position="1"/>
        <end position="57"/>
    </location>
</feature>
<feature type="transmembrane region" description="Helical" evidence="1">
    <location>
        <begin position="33"/>
        <end position="53"/>
    </location>
</feature>
<keyword id="KW-1003">Cell membrane</keyword>
<keyword id="KW-0472">Membrane</keyword>
<keyword id="KW-1185">Reference proteome</keyword>
<keyword id="KW-0812">Transmembrane</keyword>
<keyword id="KW-1133">Transmembrane helix</keyword>
<evidence type="ECO:0000255" key="1"/>
<evidence type="ECO:0000269" key="2">
    <source>
    </source>
</evidence>
<evidence type="ECO:0000305" key="3"/>
<reference key="1">
    <citation type="journal article" date="2002" name="Nature">
        <title>The genome sequence of Schizosaccharomyces pombe.</title>
        <authorList>
            <person name="Wood V."/>
            <person name="Gwilliam R."/>
            <person name="Rajandream M.A."/>
            <person name="Lyne M.H."/>
            <person name="Lyne R."/>
            <person name="Stewart A."/>
            <person name="Sgouros J.G."/>
            <person name="Peat N."/>
            <person name="Hayles J."/>
            <person name="Baker S.G."/>
            <person name="Basham D."/>
            <person name="Bowman S."/>
            <person name="Brooks K."/>
            <person name="Brown D."/>
            <person name="Brown S."/>
            <person name="Chillingworth T."/>
            <person name="Churcher C.M."/>
            <person name="Collins M."/>
            <person name="Connor R."/>
            <person name="Cronin A."/>
            <person name="Davis P."/>
            <person name="Feltwell T."/>
            <person name="Fraser A."/>
            <person name="Gentles S."/>
            <person name="Goble A."/>
            <person name="Hamlin N."/>
            <person name="Harris D.E."/>
            <person name="Hidalgo J."/>
            <person name="Hodgson G."/>
            <person name="Holroyd S."/>
            <person name="Hornsby T."/>
            <person name="Howarth S."/>
            <person name="Huckle E.J."/>
            <person name="Hunt S."/>
            <person name="Jagels K."/>
            <person name="James K.D."/>
            <person name="Jones L."/>
            <person name="Jones M."/>
            <person name="Leather S."/>
            <person name="McDonald S."/>
            <person name="McLean J."/>
            <person name="Mooney P."/>
            <person name="Moule S."/>
            <person name="Mungall K.L."/>
            <person name="Murphy L.D."/>
            <person name="Niblett D."/>
            <person name="Odell C."/>
            <person name="Oliver K."/>
            <person name="O'Neil S."/>
            <person name="Pearson D."/>
            <person name="Quail M.A."/>
            <person name="Rabbinowitsch E."/>
            <person name="Rutherford K.M."/>
            <person name="Rutter S."/>
            <person name="Saunders D."/>
            <person name="Seeger K."/>
            <person name="Sharp S."/>
            <person name="Skelton J."/>
            <person name="Simmonds M.N."/>
            <person name="Squares R."/>
            <person name="Squares S."/>
            <person name="Stevens K."/>
            <person name="Taylor K."/>
            <person name="Taylor R.G."/>
            <person name="Tivey A."/>
            <person name="Walsh S.V."/>
            <person name="Warren T."/>
            <person name="Whitehead S."/>
            <person name="Woodward J.R."/>
            <person name="Volckaert G."/>
            <person name="Aert R."/>
            <person name="Robben J."/>
            <person name="Grymonprez B."/>
            <person name="Weltjens I."/>
            <person name="Vanstreels E."/>
            <person name="Rieger M."/>
            <person name="Schaefer M."/>
            <person name="Mueller-Auer S."/>
            <person name="Gabel C."/>
            <person name="Fuchs M."/>
            <person name="Duesterhoeft A."/>
            <person name="Fritzc C."/>
            <person name="Holzer E."/>
            <person name="Moestl D."/>
            <person name="Hilbert H."/>
            <person name="Borzym K."/>
            <person name="Langer I."/>
            <person name="Beck A."/>
            <person name="Lehrach H."/>
            <person name="Reinhardt R."/>
            <person name="Pohl T.M."/>
            <person name="Eger P."/>
            <person name="Zimmermann W."/>
            <person name="Wedler H."/>
            <person name="Wambutt R."/>
            <person name="Purnelle B."/>
            <person name="Goffeau A."/>
            <person name="Cadieu E."/>
            <person name="Dreano S."/>
            <person name="Gloux S."/>
            <person name="Lelaure V."/>
            <person name="Mottier S."/>
            <person name="Galibert F."/>
            <person name="Aves S.J."/>
            <person name="Xiang Z."/>
            <person name="Hunt C."/>
            <person name="Moore K."/>
            <person name="Hurst S.M."/>
            <person name="Lucas M."/>
            <person name="Rochet M."/>
            <person name="Gaillardin C."/>
            <person name="Tallada V.A."/>
            <person name="Garzon A."/>
            <person name="Thode G."/>
            <person name="Daga R.R."/>
            <person name="Cruzado L."/>
            <person name="Jimenez J."/>
            <person name="Sanchez M."/>
            <person name="del Rey F."/>
            <person name="Benito J."/>
            <person name="Dominguez A."/>
            <person name="Revuelta J.L."/>
            <person name="Moreno S."/>
            <person name="Armstrong J."/>
            <person name="Forsburg S.L."/>
            <person name="Cerutti L."/>
            <person name="Lowe T."/>
            <person name="McCombie W.R."/>
            <person name="Paulsen I."/>
            <person name="Potashkin J."/>
            <person name="Shpakovski G.V."/>
            <person name="Ussery D."/>
            <person name="Barrell B.G."/>
            <person name="Nurse P."/>
        </authorList>
    </citation>
    <scope>NUCLEOTIDE SEQUENCE [LARGE SCALE GENOMIC DNA]</scope>
    <source>
        <strain>972 / ATCC 24843</strain>
    </source>
</reference>
<reference key="2">
    <citation type="journal article" date="2011" name="Science">
        <title>Comparative functional genomics of the fission yeasts.</title>
        <authorList>
            <person name="Rhind N."/>
            <person name="Chen Z."/>
            <person name="Yassour M."/>
            <person name="Thompson D.A."/>
            <person name="Haas B.J."/>
            <person name="Habib N."/>
            <person name="Wapinski I."/>
            <person name="Roy S."/>
            <person name="Lin M.F."/>
            <person name="Heiman D.I."/>
            <person name="Young S.K."/>
            <person name="Furuya K."/>
            <person name="Guo Y."/>
            <person name="Pidoux A."/>
            <person name="Chen H.M."/>
            <person name="Robbertse B."/>
            <person name="Goldberg J.M."/>
            <person name="Aoki K."/>
            <person name="Bayne E.H."/>
            <person name="Berlin A.M."/>
            <person name="Desjardins C.A."/>
            <person name="Dobbs E."/>
            <person name="Dukaj L."/>
            <person name="Fan L."/>
            <person name="FitzGerald M.G."/>
            <person name="French C."/>
            <person name="Gujja S."/>
            <person name="Hansen K."/>
            <person name="Keifenheim D."/>
            <person name="Levin J.Z."/>
            <person name="Mosher R.A."/>
            <person name="Mueller C.A."/>
            <person name="Pfiffner J."/>
            <person name="Priest M."/>
            <person name="Russ C."/>
            <person name="Smialowska A."/>
            <person name="Swoboda P."/>
            <person name="Sykes S.M."/>
            <person name="Vaughn M."/>
            <person name="Vengrova S."/>
            <person name="Yoder R."/>
            <person name="Zeng Q."/>
            <person name="Allshire R."/>
            <person name="Baulcombe D."/>
            <person name="Birren B.W."/>
            <person name="Brown W."/>
            <person name="Ekwall K."/>
            <person name="Kellis M."/>
            <person name="Leatherwood J."/>
            <person name="Levin H."/>
            <person name="Margalit H."/>
            <person name="Martienssen R."/>
            <person name="Nieduszynski C.A."/>
            <person name="Spatafora J.W."/>
            <person name="Friedman N."/>
            <person name="Dalgaard J.Z."/>
            <person name="Baumann P."/>
            <person name="Niki H."/>
            <person name="Regev A."/>
            <person name="Nusbaum C."/>
        </authorList>
    </citation>
    <scope>REVISION OF GENE MODEL</scope>
</reference>
<reference key="3">
    <citation type="journal article" date="2006" name="FEBS Lett.">
        <title>The fission yeast stress MAPK cascade regulates the pmp3+ gene that encodes a highly conserved plasma membrane protein.</title>
        <authorList>
            <person name="Wang L.-Y."/>
            <person name="Shiozaki K."/>
        </authorList>
    </citation>
    <scope>FUNCTION</scope>
</reference>
<comment type="function">
    <text evidence="2">Plays a role in the regulation of membrane potential. Could mediate a proton leak. Regulated by the spc1-atf1 pathway and so expression is stress-induced.</text>
</comment>
<comment type="subcellular location">
    <subcellularLocation>
        <location evidence="3">Cell membrane</location>
        <topology evidence="3">Single-pass membrane protein</topology>
    </subcellularLocation>
</comment>
<comment type="similarity">
    <text evidence="3">Belongs to the UPF0057 (PMP3) family.</text>
</comment>
<name>PMP3_SCHPO</name>
<proteinExistence type="inferred from homology"/>
<protein>
    <recommendedName>
        <fullName>Plasma membrane proteolipid 3</fullName>
    </recommendedName>
</protein>
<dbReference type="EMBL" id="CU329671">
    <property type="protein sequence ID" value="CAC22612.2"/>
    <property type="molecule type" value="Genomic_DNA"/>
</dbReference>
<dbReference type="RefSeq" id="NP_595350.2">
    <property type="nucleotide sequence ID" value="NM_001021258.2"/>
</dbReference>
<dbReference type="SMR" id="Q9C1W4"/>
<dbReference type="BioGRID" id="277644">
    <property type="interactions" value="13"/>
</dbReference>
<dbReference type="FunCoup" id="Q9C1W4">
    <property type="interactions" value="143"/>
</dbReference>
<dbReference type="STRING" id="284812.Q9C1W4"/>
<dbReference type="PaxDb" id="4896-SPBC713.11c.1"/>
<dbReference type="EnsemblFungi" id="SPBC713.11c.1">
    <property type="protein sequence ID" value="SPBC713.11c.1:pep"/>
    <property type="gene ID" value="SPBC713.11c"/>
</dbReference>
<dbReference type="GeneID" id="2541129"/>
<dbReference type="KEGG" id="spo:2541129"/>
<dbReference type="PomBase" id="SPBC713.11c">
    <property type="gene designation" value="pmp3"/>
</dbReference>
<dbReference type="VEuPathDB" id="FungiDB:SPBC713.11c"/>
<dbReference type="eggNOG" id="KOG1773">
    <property type="taxonomic scope" value="Eukaryota"/>
</dbReference>
<dbReference type="HOGENOM" id="CLU_107649_6_2_1"/>
<dbReference type="InParanoid" id="Q9C1W4"/>
<dbReference type="OMA" id="VHAIWVI"/>
<dbReference type="PRO" id="PR:Q9C1W4"/>
<dbReference type="Proteomes" id="UP000002485">
    <property type="component" value="Chromosome II"/>
</dbReference>
<dbReference type="GO" id="GO:0005737">
    <property type="term" value="C:cytoplasm"/>
    <property type="evidence" value="ECO:0007005"/>
    <property type="project" value="PomBase"/>
</dbReference>
<dbReference type="GO" id="GO:0005886">
    <property type="term" value="C:plasma membrane"/>
    <property type="evidence" value="ECO:0000266"/>
    <property type="project" value="PomBase"/>
</dbReference>
<dbReference type="InterPro" id="IPR000612">
    <property type="entry name" value="PMP3"/>
</dbReference>
<dbReference type="PANTHER" id="PTHR21659">
    <property type="entry name" value="HYDROPHOBIC PROTEIN RCI2 LOW TEMPERATURE AND SALT RESPONSIVE PROTEIN LTI6 -RELATED"/>
    <property type="match status" value="1"/>
</dbReference>
<dbReference type="PANTHER" id="PTHR21659:SF42">
    <property type="entry name" value="UPF0057 MEMBRANE PROTEIN ZK632.10-RELATED"/>
    <property type="match status" value="1"/>
</dbReference>
<dbReference type="Pfam" id="PF01679">
    <property type="entry name" value="Pmp3"/>
    <property type="match status" value="1"/>
</dbReference>
<dbReference type="PROSITE" id="PS01309">
    <property type="entry name" value="UPF0057"/>
    <property type="match status" value="1"/>
</dbReference>
<accession>Q9C1W4</accession>
<sequence>MALTGSDIFKVIFAIILPPLGVFLERGCGADVIINILLCCLGYVPGIIHALYIILKY</sequence>
<gene>
    <name type="primary">pmp3</name>
    <name type="ORF">SPBC713.11c</name>
</gene>
<organism>
    <name type="scientific">Schizosaccharomyces pombe (strain 972 / ATCC 24843)</name>
    <name type="common">Fission yeast</name>
    <dbReference type="NCBI Taxonomy" id="284812"/>
    <lineage>
        <taxon>Eukaryota</taxon>
        <taxon>Fungi</taxon>
        <taxon>Dikarya</taxon>
        <taxon>Ascomycota</taxon>
        <taxon>Taphrinomycotina</taxon>
        <taxon>Schizosaccharomycetes</taxon>
        <taxon>Schizosaccharomycetales</taxon>
        <taxon>Schizosaccharomycetaceae</taxon>
        <taxon>Schizosaccharomyces</taxon>
    </lineage>
</organism>